<name>QUEC2_RHILO</name>
<keyword id="KW-0067">ATP-binding</keyword>
<keyword id="KW-0436">Ligase</keyword>
<keyword id="KW-0479">Metal-binding</keyword>
<keyword id="KW-0547">Nucleotide-binding</keyword>
<keyword id="KW-0671">Queuosine biosynthesis</keyword>
<keyword id="KW-0862">Zinc</keyword>
<sequence length="245" mass="27324">MQRDPGTALVLFSGGQDSTTCLAWALENFERVETIGFDYGQRHRIELDVRPYLLERIRTDFPAWRGRLGGDHMIDMAVLGQISDTALTRGVEVALNANGLPNTFVPGRNLLFLGFAAALAYRLSAKHLVIGVAETDRFSYPDCRDDAVKAIQLALNLGMEKRFIIHTPLMHRDKAQTWALADWLGGEALVKLICEGSHTCYSGDREHRHSWGFGCGTCIECNLRAAGWEQFRSCKEAPVTAHEMT</sequence>
<feature type="chain" id="PRO_0000246901" description="7-cyano-7-deazaguanine synthase 2">
    <location>
        <begin position="1"/>
        <end position="245"/>
    </location>
</feature>
<feature type="binding site" evidence="1">
    <location>
        <begin position="12"/>
        <end position="22"/>
    </location>
    <ligand>
        <name>ATP</name>
        <dbReference type="ChEBI" id="CHEBI:30616"/>
    </ligand>
</feature>
<feature type="binding site" evidence="1">
    <location>
        <position position="200"/>
    </location>
    <ligand>
        <name>Zn(2+)</name>
        <dbReference type="ChEBI" id="CHEBI:29105"/>
    </ligand>
</feature>
<feature type="binding site" evidence="1">
    <location>
        <position position="215"/>
    </location>
    <ligand>
        <name>Zn(2+)</name>
        <dbReference type="ChEBI" id="CHEBI:29105"/>
    </ligand>
</feature>
<feature type="binding site" evidence="1">
    <location>
        <position position="218"/>
    </location>
    <ligand>
        <name>Zn(2+)</name>
        <dbReference type="ChEBI" id="CHEBI:29105"/>
    </ligand>
</feature>
<feature type="binding site" evidence="1">
    <location>
        <position position="221"/>
    </location>
    <ligand>
        <name>Zn(2+)</name>
        <dbReference type="ChEBI" id="CHEBI:29105"/>
    </ligand>
</feature>
<feature type="sequence conflict" description="In Ref. 1; CAD31298." evidence="2" ref="1">
    <original>E</original>
    <variation>G</variation>
    <location>
        <position position="55"/>
    </location>
</feature>
<feature type="sequence conflict" description="In Ref. 1; CAD31298." evidence="2" ref="1">
    <original>G</original>
    <variation>E</variation>
    <location>
        <position position="70"/>
    </location>
</feature>
<feature type="sequence conflict" description="In Ref. 1; CAD31298." evidence="2" ref="1">
    <original>G</original>
    <variation>D</variation>
    <location>
        <position position="90"/>
    </location>
</feature>
<feature type="sequence conflict" description="In Ref. 1; CAD31298." evidence="2" ref="1">
    <original>P</original>
    <variation>T</variation>
    <location>
        <position position="101"/>
    </location>
</feature>
<feature type="sequence conflict" description="In Ref. 1; CAD31298." evidence="2" ref="1">
    <original>L</original>
    <variation>I</variation>
    <location>
        <position position="119"/>
    </location>
</feature>
<feature type="sequence conflict" description="In Ref. 1; CAD31298." evidence="2" ref="1">
    <original>LS</original>
    <variation>MG</variation>
    <location>
        <begin position="123"/>
        <end position="124"/>
    </location>
</feature>
<feature type="sequence conflict" description="In Ref. 1; CAD31298." evidence="2" ref="1">
    <original>A</original>
    <variation>S</variation>
    <location>
        <position position="133"/>
    </location>
</feature>
<feature type="sequence conflict" description="In Ref. 1; CAD31298." evidence="2" ref="1">
    <original>I</original>
    <variation>M</variation>
    <location>
        <position position="151"/>
    </location>
</feature>
<feature type="sequence conflict" description="In Ref. 1; CAD31298." evidence="2" ref="1">
    <original>KRFI</original>
    <variation>THLV</variation>
    <location>
        <begin position="161"/>
        <end position="164"/>
    </location>
</feature>
<feature type="sequence conflict" description="In Ref. 1; CAD31298." evidence="2" ref="1">
    <original>H</original>
    <variation>R</variation>
    <location>
        <position position="171"/>
    </location>
</feature>
<feature type="sequence conflict" description="In Ref. 1; CAD31298." evidence="2" ref="1">
    <original>D</original>
    <variation>G</variation>
    <location>
        <position position="182"/>
    </location>
</feature>
<feature type="sequence conflict" description="In Ref. 1; CAD31298." evidence="2" ref="1">
    <original>A</original>
    <variation>V</variation>
    <location>
        <position position="188"/>
    </location>
</feature>
<feature type="sequence conflict" description="In Ref. 1; CAD31298." evidence="2" ref="1">
    <original>S</original>
    <variation>C</variation>
    <location>
        <position position="233"/>
    </location>
</feature>
<feature type="sequence conflict" description="In Ref. 1; CAD31298." evidence="2" ref="1">
    <original>T</original>
    <variation>A</variation>
    <location>
        <position position="240"/>
    </location>
</feature>
<dbReference type="EC" id="6.3.4.20" evidence="1"/>
<dbReference type="EMBL" id="AL672114">
    <property type="protein sequence ID" value="CAD31298.1"/>
    <property type="molecule type" value="Genomic_DNA"/>
</dbReference>
<dbReference type="EMBL" id="BA000012">
    <property type="protein sequence ID" value="BAB52299.1"/>
    <property type="molecule type" value="Genomic_DNA"/>
</dbReference>
<dbReference type="RefSeq" id="WP_010913630.1">
    <property type="nucleotide sequence ID" value="NC_002678.2"/>
</dbReference>
<dbReference type="SMR" id="Q98AM3"/>
<dbReference type="KEGG" id="mlo:mll5936"/>
<dbReference type="eggNOG" id="COG0603">
    <property type="taxonomic scope" value="Bacteria"/>
</dbReference>
<dbReference type="HOGENOM" id="CLU_081854_0_0_5"/>
<dbReference type="UniPathway" id="UPA00391"/>
<dbReference type="Proteomes" id="UP000000552">
    <property type="component" value="Chromosome"/>
</dbReference>
<dbReference type="GO" id="GO:0005524">
    <property type="term" value="F:ATP binding"/>
    <property type="evidence" value="ECO:0007669"/>
    <property type="project" value="UniProtKB-UniRule"/>
</dbReference>
<dbReference type="GO" id="GO:0016879">
    <property type="term" value="F:ligase activity, forming carbon-nitrogen bonds"/>
    <property type="evidence" value="ECO:0007669"/>
    <property type="project" value="UniProtKB-UniRule"/>
</dbReference>
<dbReference type="GO" id="GO:0008270">
    <property type="term" value="F:zinc ion binding"/>
    <property type="evidence" value="ECO:0007669"/>
    <property type="project" value="UniProtKB-UniRule"/>
</dbReference>
<dbReference type="GO" id="GO:0008616">
    <property type="term" value="P:queuosine biosynthetic process"/>
    <property type="evidence" value="ECO:0007669"/>
    <property type="project" value="UniProtKB-UniRule"/>
</dbReference>
<dbReference type="CDD" id="cd01995">
    <property type="entry name" value="QueC-like"/>
    <property type="match status" value="1"/>
</dbReference>
<dbReference type="Gene3D" id="3.40.50.620">
    <property type="entry name" value="HUPs"/>
    <property type="match status" value="1"/>
</dbReference>
<dbReference type="HAMAP" id="MF_01633">
    <property type="entry name" value="QueC"/>
    <property type="match status" value="1"/>
</dbReference>
<dbReference type="InterPro" id="IPR018317">
    <property type="entry name" value="QueC"/>
</dbReference>
<dbReference type="InterPro" id="IPR014729">
    <property type="entry name" value="Rossmann-like_a/b/a_fold"/>
</dbReference>
<dbReference type="NCBIfam" id="TIGR00364">
    <property type="entry name" value="7-cyano-7-deazaguanine synthase QueC"/>
    <property type="match status" value="1"/>
</dbReference>
<dbReference type="PANTHER" id="PTHR42914">
    <property type="entry name" value="7-CYANO-7-DEAZAGUANINE SYNTHASE"/>
    <property type="match status" value="1"/>
</dbReference>
<dbReference type="PANTHER" id="PTHR42914:SF1">
    <property type="entry name" value="7-CYANO-7-DEAZAGUANINE SYNTHASE"/>
    <property type="match status" value="1"/>
</dbReference>
<dbReference type="Pfam" id="PF06508">
    <property type="entry name" value="QueC"/>
    <property type="match status" value="1"/>
</dbReference>
<dbReference type="PIRSF" id="PIRSF006293">
    <property type="entry name" value="ExsB"/>
    <property type="match status" value="1"/>
</dbReference>
<dbReference type="SUPFAM" id="SSF52402">
    <property type="entry name" value="Adenine nucleotide alpha hydrolases-like"/>
    <property type="match status" value="1"/>
</dbReference>
<proteinExistence type="inferred from homology"/>
<protein>
    <recommendedName>
        <fullName evidence="1">7-cyano-7-deazaguanine synthase 2</fullName>
        <ecNumber evidence="1">6.3.4.20</ecNumber>
    </recommendedName>
    <alternativeName>
        <fullName evidence="1">7-cyano-7-carbaguanine synthase 2</fullName>
    </alternativeName>
    <alternativeName>
        <fullName evidence="1">PreQ(0) synthase 2</fullName>
    </alternativeName>
    <alternativeName>
        <fullName evidence="1">Queuosine biosynthesis protein QueC 2</fullName>
    </alternativeName>
</protein>
<gene>
    <name evidence="1" type="primary">queC2</name>
    <name type="ordered locus">mll5936</name>
</gene>
<accession>Q98AM3</accession>
<accession>Q8KGN5</accession>
<evidence type="ECO:0000255" key="1">
    <source>
        <dbReference type="HAMAP-Rule" id="MF_01633"/>
    </source>
</evidence>
<evidence type="ECO:0000305" key="2"/>
<organism>
    <name type="scientific">Mesorhizobium japonicum (strain LMG 29417 / CECT 9101 / MAFF 303099)</name>
    <name type="common">Mesorhizobium loti (strain MAFF 303099)</name>
    <dbReference type="NCBI Taxonomy" id="266835"/>
    <lineage>
        <taxon>Bacteria</taxon>
        <taxon>Pseudomonadati</taxon>
        <taxon>Pseudomonadota</taxon>
        <taxon>Alphaproteobacteria</taxon>
        <taxon>Hyphomicrobiales</taxon>
        <taxon>Phyllobacteriaceae</taxon>
        <taxon>Mesorhizobium</taxon>
    </lineage>
</organism>
<reference key="1">
    <citation type="journal article" date="2002" name="J. Bacteriol.">
        <title>Comparative sequence analysis of the symbiosis island of Mesorhizobium loti strain R7A.</title>
        <authorList>
            <person name="Sullivan J.T."/>
            <person name="Trzebiatowski J.R."/>
            <person name="Cruickshank R.W."/>
            <person name="Gouzy J."/>
            <person name="Brown S.D."/>
            <person name="Elliot R.M."/>
            <person name="Fleetwood D.J."/>
            <person name="McCallum N.G."/>
            <person name="Rossbach U."/>
            <person name="Stuart G.S."/>
            <person name="Weaver J.E."/>
            <person name="Webby R.J."/>
            <person name="de Bruijn F.J."/>
            <person name="Ronson C.W."/>
        </authorList>
    </citation>
    <scope>NUCLEOTIDE SEQUENCE [GENOMIC DNA]</scope>
    <source>
        <strain>R7A</strain>
    </source>
</reference>
<reference key="2">
    <citation type="journal article" date="2000" name="DNA Res.">
        <title>Complete genome structure of the nitrogen-fixing symbiotic bacterium Mesorhizobium loti.</title>
        <authorList>
            <person name="Kaneko T."/>
            <person name="Nakamura Y."/>
            <person name="Sato S."/>
            <person name="Asamizu E."/>
            <person name="Kato T."/>
            <person name="Sasamoto S."/>
            <person name="Watanabe A."/>
            <person name="Idesawa K."/>
            <person name="Ishikawa A."/>
            <person name="Kawashima K."/>
            <person name="Kimura T."/>
            <person name="Kishida Y."/>
            <person name="Kiyokawa C."/>
            <person name="Kohara M."/>
            <person name="Matsumoto M."/>
            <person name="Matsuno A."/>
            <person name="Mochizuki Y."/>
            <person name="Nakayama S."/>
            <person name="Nakazaki N."/>
            <person name="Shimpo S."/>
            <person name="Sugimoto M."/>
            <person name="Takeuchi C."/>
            <person name="Yamada M."/>
            <person name="Tabata S."/>
        </authorList>
    </citation>
    <scope>NUCLEOTIDE SEQUENCE [LARGE SCALE GENOMIC DNA]</scope>
    <source>
        <strain>LMG 29417 / CECT 9101 / MAFF 303099</strain>
    </source>
</reference>
<comment type="function">
    <text evidence="1">Catalyzes the ATP-dependent conversion of 7-carboxy-7-deazaguanine (CDG) to 7-cyano-7-deazaguanine (preQ(0)).</text>
</comment>
<comment type="catalytic activity">
    <reaction evidence="1">
        <text>7-carboxy-7-deazaguanine + NH4(+) + ATP = 7-cyano-7-deazaguanine + ADP + phosphate + H2O + H(+)</text>
        <dbReference type="Rhea" id="RHEA:27982"/>
        <dbReference type="ChEBI" id="CHEBI:15377"/>
        <dbReference type="ChEBI" id="CHEBI:15378"/>
        <dbReference type="ChEBI" id="CHEBI:28938"/>
        <dbReference type="ChEBI" id="CHEBI:30616"/>
        <dbReference type="ChEBI" id="CHEBI:43474"/>
        <dbReference type="ChEBI" id="CHEBI:45075"/>
        <dbReference type="ChEBI" id="CHEBI:61036"/>
        <dbReference type="ChEBI" id="CHEBI:456216"/>
        <dbReference type="EC" id="6.3.4.20"/>
    </reaction>
</comment>
<comment type="cofactor">
    <cofactor evidence="1">
        <name>Zn(2+)</name>
        <dbReference type="ChEBI" id="CHEBI:29105"/>
    </cofactor>
    <text evidence="1">Binds 1 zinc ion per subunit.</text>
</comment>
<comment type="pathway">
    <text evidence="1">Purine metabolism; 7-cyano-7-deazaguanine biosynthesis.</text>
</comment>
<comment type="similarity">
    <text evidence="1">Belongs to the QueC family.</text>
</comment>